<keyword id="KW-0066">ATP synthesis</keyword>
<keyword id="KW-0997">Cell inner membrane</keyword>
<keyword id="KW-1003">Cell membrane</keyword>
<keyword id="KW-0138">CF(0)</keyword>
<keyword id="KW-0375">Hydrogen ion transport</keyword>
<keyword id="KW-0406">Ion transport</keyword>
<keyword id="KW-0472">Membrane</keyword>
<keyword id="KW-0812">Transmembrane</keyword>
<keyword id="KW-1133">Transmembrane helix</keyword>
<keyword id="KW-0813">Transport</keyword>
<feature type="chain" id="PRO_0000368876" description="ATP synthase subunit b">
    <location>
        <begin position="1"/>
        <end position="156"/>
    </location>
</feature>
<feature type="transmembrane region" description="Helical" evidence="1">
    <location>
        <begin position="3"/>
        <end position="23"/>
    </location>
</feature>
<organism>
    <name type="scientific">Xylella fastidiosa (strain M23)</name>
    <dbReference type="NCBI Taxonomy" id="405441"/>
    <lineage>
        <taxon>Bacteria</taxon>
        <taxon>Pseudomonadati</taxon>
        <taxon>Pseudomonadota</taxon>
        <taxon>Gammaproteobacteria</taxon>
        <taxon>Lysobacterales</taxon>
        <taxon>Lysobacteraceae</taxon>
        <taxon>Xylella</taxon>
    </lineage>
</organism>
<comment type="function">
    <text evidence="1">F(1)F(0) ATP synthase produces ATP from ADP in the presence of a proton or sodium gradient. F-type ATPases consist of two structural domains, F(1) containing the extramembraneous catalytic core and F(0) containing the membrane proton channel, linked together by a central stalk and a peripheral stalk. During catalysis, ATP synthesis in the catalytic domain of F(1) is coupled via a rotary mechanism of the central stalk subunits to proton translocation.</text>
</comment>
<comment type="function">
    <text evidence="1">Component of the F(0) channel, it forms part of the peripheral stalk, linking F(1) to F(0).</text>
</comment>
<comment type="subunit">
    <text evidence="1">F-type ATPases have 2 components, F(1) - the catalytic core - and F(0) - the membrane proton channel. F(1) has five subunits: alpha(3), beta(3), gamma(1), delta(1), epsilon(1). F(0) has three main subunits: a(1), b(2) and c(10-14). The alpha and beta chains form an alternating ring which encloses part of the gamma chain. F(1) is attached to F(0) by a central stalk formed by the gamma and epsilon chains, while a peripheral stalk is formed by the delta and b chains.</text>
</comment>
<comment type="subcellular location">
    <subcellularLocation>
        <location evidence="1">Cell inner membrane</location>
        <topology evidence="1">Single-pass membrane protein</topology>
    </subcellularLocation>
</comment>
<comment type="similarity">
    <text evidence="1">Belongs to the ATPase B chain family.</text>
</comment>
<name>ATPF_XYLF2</name>
<reference key="1">
    <citation type="journal article" date="2010" name="J. Bacteriol.">
        <title>Whole genome sequences of two Xylella fastidiosa strains (M12 and M23) causing almond leaf scorch disease in California.</title>
        <authorList>
            <person name="Chen J."/>
            <person name="Xie G."/>
            <person name="Han S."/>
            <person name="Chertkov O."/>
            <person name="Sims D."/>
            <person name="Civerolo E.L."/>
        </authorList>
    </citation>
    <scope>NUCLEOTIDE SEQUENCE [LARGE SCALE GENOMIC DNA]</scope>
    <source>
        <strain>M23</strain>
    </source>
</reference>
<gene>
    <name evidence="1" type="primary">atpF</name>
    <name type="ordered locus">XfasM23_0428</name>
</gene>
<protein>
    <recommendedName>
        <fullName evidence="1">ATP synthase subunit b</fullName>
    </recommendedName>
    <alternativeName>
        <fullName evidence="1">ATP synthase F(0) sector subunit b</fullName>
    </alternativeName>
    <alternativeName>
        <fullName evidence="1">ATPase subunit I</fullName>
    </alternativeName>
    <alternativeName>
        <fullName evidence="1">F-type ATPase subunit b</fullName>
        <shortName evidence="1">F-ATPase subunit b</shortName>
    </alternativeName>
</protein>
<dbReference type="EMBL" id="CP001011">
    <property type="protein sequence ID" value="ACB91875.1"/>
    <property type="molecule type" value="Genomic_DNA"/>
</dbReference>
<dbReference type="RefSeq" id="WP_004090074.1">
    <property type="nucleotide sequence ID" value="NC_010577.1"/>
</dbReference>
<dbReference type="SMR" id="B2I864"/>
<dbReference type="KEGG" id="xfn:XfasM23_0428"/>
<dbReference type="HOGENOM" id="CLU_079215_4_5_6"/>
<dbReference type="Proteomes" id="UP000001698">
    <property type="component" value="Chromosome"/>
</dbReference>
<dbReference type="GO" id="GO:0005886">
    <property type="term" value="C:plasma membrane"/>
    <property type="evidence" value="ECO:0007669"/>
    <property type="project" value="UniProtKB-SubCell"/>
</dbReference>
<dbReference type="GO" id="GO:0045259">
    <property type="term" value="C:proton-transporting ATP synthase complex"/>
    <property type="evidence" value="ECO:0007669"/>
    <property type="project" value="UniProtKB-KW"/>
</dbReference>
<dbReference type="GO" id="GO:0046933">
    <property type="term" value="F:proton-transporting ATP synthase activity, rotational mechanism"/>
    <property type="evidence" value="ECO:0007669"/>
    <property type="project" value="UniProtKB-UniRule"/>
</dbReference>
<dbReference type="GO" id="GO:0046961">
    <property type="term" value="F:proton-transporting ATPase activity, rotational mechanism"/>
    <property type="evidence" value="ECO:0007669"/>
    <property type="project" value="TreeGrafter"/>
</dbReference>
<dbReference type="CDD" id="cd06503">
    <property type="entry name" value="ATP-synt_Fo_b"/>
    <property type="match status" value="1"/>
</dbReference>
<dbReference type="Gene3D" id="6.10.250.1580">
    <property type="match status" value="1"/>
</dbReference>
<dbReference type="HAMAP" id="MF_01398">
    <property type="entry name" value="ATP_synth_b_bprime"/>
    <property type="match status" value="1"/>
</dbReference>
<dbReference type="InterPro" id="IPR028987">
    <property type="entry name" value="ATP_synth_B-like_membr_sf"/>
</dbReference>
<dbReference type="InterPro" id="IPR002146">
    <property type="entry name" value="ATP_synth_b/b'su_bac/chlpt"/>
</dbReference>
<dbReference type="InterPro" id="IPR005864">
    <property type="entry name" value="ATP_synth_F0_bsu_bac"/>
</dbReference>
<dbReference type="InterPro" id="IPR050059">
    <property type="entry name" value="ATP_synthase_B_chain"/>
</dbReference>
<dbReference type="NCBIfam" id="TIGR01144">
    <property type="entry name" value="ATP_synt_b"/>
    <property type="match status" value="1"/>
</dbReference>
<dbReference type="NCBIfam" id="NF004411">
    <property type="entry name" value="PRK05759.1-2"/>
    <property type="match status" value="1"/>
</dbReference>
<dbReference type="PANTHER" id="PTHR33445:SF1">
    <property type="entry name" value="ATP SYNTHASE SUBUNIT B"/>
    <property type="match status" value="1"/>
</dbReference>
<dbReference type="PANTHER" id="PTHR33445">
    <property type="entry name" value="ATP SYNTHASE SUBUNIT B', CHLOROPLASTIC"/>
    <property type="match status" value="1"/>
</dbReference>
<dbReference type="Pfam" id="PF00430">
    <property type="entry name" value="ATP-synt_B"/>
    <property type="match status" value="1"/>
</dbReference>
<dbReference type="SUPFAM" id="SSF81573">
    <property type="entry name" value="F1F0 ATP synthase subunit B, membrane domain"/>
    <property type="match status" value="1"/>
</dbReference>
<sequence>MDITFTIFAQSLAFAALIWIVATKIWPPLIKVIEERQQKIAEGLAAADLGQKELAQAQEEIKKTLKNAHKKANEIIEQAHARAHQIIEAAKAEAIAETNRQQNLAQVEIEAAAKRAREELRKHVSILAVNGAEKLLKREIDVNTHKMLLDELAAEI</sequence>
<accession>B2I864</accession>
<evidence type="ECO:0000255" key="1">
    <source>
        <dbReference type="HAMAP-Rule" id="MF_01398"/>
    </source>
</evidence>
<proteinExistence type="inferred from homology"/>